<feature type="chain" id="PRO_0000171710" description="tRNA-specific adenosine deaminase">
    <location>
        <begin position="1"/>
        <end position="159"/>
    </location>
</feature>
<feature type="domain" description="CMP/dCMP-type deaminase" evidence="2">
    <location>
        <begin position="6"/>
        <end position="133"/>
    </location>
</feature>
<feature type="active site" description="Proton donor" evidence="1">
    <location>
        <position position="59"/>
    </location>
</feature>
<feature type="binding site" evidence="1">
    <location>
        <position position="57"/>
    </location>
    <ligand>
        <name>Zn(2+)</name>
        <dbReference type="ChEBI" id="CHEBI:29105"/>
        <note>catalytic</note>
    </ligand>
</feature>
<feature type="binding site" evidence="1">
    <location>
        <position position="87"/>
    </location>
    <ligand>
        <name>Zn(2+)</name>
        <dbReference type="ChEBI" id="CHEBI:29105"/>
        <note>catalytic</note>
    </ligand>
</feature>
<feature type="binding site" evidence="1">
    <location>
        <position position="90"/>
    </location>
    <ligand>
        <name>Zn(2+)</name>
        <dbReference type="ChEBI" id="CHEBI:29105"/>
        <note>catalytic</note>
    </ligand>
</feature>
<comment type="function">
    <text evidence="1">Catalyzes the deamination of adenosine to inosine at the wobble position 34 of tRNA(Arg2).</text>
</comment>
<comment type="catalytic activity">
    <reaction evidence="1">
        <text>adenosine(34) in tRNA + H2O + H(+) = inosine(34) in tRNA + NH4(+)</text>
        <dbReference type="Rhea" id="RHEA:43168"/>
        <dbReference type="Rhea" id="RHEA-COMP:10373"/>
        <dbReference type="Rhea" id="RHEA-COMP:10374"/>
        <dbReference type="ChEBI" id="CHEBI:15377"/>
        <dbReference type="ChEBI" id="CHEBI:15378"/>
        <dbReference type="ChEBI" id="CHEBI:28938"/>
        <dbReference type="ChEBI" id="CHEBI:74411"/>
        <dbReference type="ChEBI" id="CHEBI:82852"/>
        <dbReference type="EC" id="3.5.4.33"/>
    </reaction>
</comment>
<comment type="cofactor">
    <cofactor evidence="1">
        <name>Zn(2+)</name>
        <dbReference type="ChEBI" id="CHEBI:29105"/>
    </cofactor>
    <text evidence="1">Binds 1 zinc ion per subunit.</text>
</comment>
<comment type="subunit">
    <text evidence="1">Homodimer.</text>
</comment>
<comment type="similarity">
    <text evidence="1">Belongs to the cytidine and deoxycytidylate deaminase family.</text>
</comment>
<keyword id="KW-0378">Hydrolase</keyword>
<keyword id="KW-0479">Metal-binding</keyword>
<keyword id="KW-0819">tRNA processing</keyword>
<keyword id="KW-0862">Zinc</keyword>
<organism>
    <name type="scientific">Streptococcus pyogenes serotype M18 (strain MGAS8232)</name>
    <dbReference type="NCBI Taxonomy" id="186103"/>
    <lineage>
        <taxon>Bacteria</taxon>
        <taxon>Bacillati</taxon>
        <taxon>Bacillota</taxon>
        <taxon>Bacilli</taxon>
        <taxon>Lactobacillales</taxon>
        <taxon>Streptococcaceae</taxon>
        <taxon>Streptococcus</taxon>
    </lineage>
</organism>
<sequence length="159" mass="17839">MPYSLEEQTYFMQEALKEAEKSLQKAEIPIGCVIVKDGEIIGRGHNAREESNQAIMHAEMMAINEANAHEGNWRLLDTTLFVTIEPCVMCSGAIGLARIPHVIYGASNQKFGGADSLYQILTDERLNHRVQVERGLLAADCANIMQTFFRQGRERKKNS</sequence>
<gene>
    <name evidence="1" type="primary">tadA</name>
    <name type="ordered locus">spyM18_0196</name>
</gene>
<name>TADA_STRP8</name>
<protein>
    <recommendedName>
        <fullName evidence="1">tRNA-specific adenosine deaminase</fullName>
        <ecNumber evidence="1">3.5.4.33</ecNumber>
    </recommendedName>
</protein>
<proteinExistence type="inferred from homology"/>
<dbReference type="EC" id="3.5.4.33" evidence="1"/>
<dbReference type="EMBL" id="AE009949">
    <property type="protein sequence ID" value="AAL96992.1"/>
    <property type="molecule type" value="Genomic_DNA"/>
</dbReference>
<dbReference type="SMR" id="Q8P2R7"/>
<dbReference type="KEGG" id="spm:spyM18_0196"/>
<dbReference type="HOGENOM" id="CLU_025810_3_2_9"/>
<dbReference type="GO" id="GO:0052717">
    <property type="term" value="F:tRNA-specific adenosine-34 deaminase activity"/>
    <property type="evidence" value="ECO:0007669"/>
    <property type="project" value="UniProtKB-UniRule"/>
</dbReference>
<dbReference type="GO" id="GO:0008270">
    <property type="term" value="F:zinc ion binding"/>
    <property type="evidence" value="ECO:0007669"/>
    <property type="project" value="UniProtKB-UniRule"/>
</dbReference>
<dbReference type="GO" id="GO:0002100">
    <property type="term" value="P:tRNA wobble adenosine to inosine editing"/>
    <property type="evidence" value="ECO:0007669"/>
    <property type="project" value="UniProtKB-UniRule"/>
</dbReference>
<dbReference type="CDD" id="cd01285">
    <property type="entry name" value="nucleoside_deaminase"/>
    <property type="match status" value="1"/>
</dbReference>
<dbReference type="FunFam" id="3.40.140.10:FF:000005">
    <property type="entry name" value="tRNA-specific adenosine deaminase"/>
    <property type="match status" value="1"/>
</dbReference>
<dbReference type="Gene3D" id="3.40.140.10">
    <property type="entry name" value="Cytidine Deaminase, domain 2"/>
    <property type="match status" value="1"/>
</dbReference>
<dbReference type="HAMAP" id="MF_00972">
    <property type="entry name" value="tRNA_aden_deaminase"/>
    <property type="match status" value="1"/>
</dbReference>
<dbReference type="InterPro" id="IPR016192">
    <property type="entry name" value="APOBEC/CMP_deaminase_Zn-bd"/>
</dbReference>
<dbReference type="InterPro" id="IPR002125">
    <property type="entry name" value="CMP_dCMP_dom"/>
</dbReference>
<dbReference type="InterPro" id="IPR016193">
    <property type="entry name" value="Cytidine_deaminase-like"/>
</dbReference>
<dbReference type="InterPro" id="IPR028883">
    <property type="entry name" value="tRNA_aden_deaminase"/>
</dbReference>
<dbReference type="NCBIfam" id="NF008113">
    <property type="entry name" value="PRK10860.1"/>
    <property type="match status" value="1"/>
</dbReference>
<dbReference type="PANTHER" id="PTHR11079">
    <property type="entry name" value="CYTOSINE DEAMINASE FAMILY MEMBER"/>
    <property type="match status" value="1"/>
</dbReference>
<dbReference type="PANTHER" id="PTHR11079:SF202">
    <property type="entry name" value="TRNA-SPECIFIC ADENOSINE DEAMINASE"/>
    <property type="match status" value="1"/>
</dbReference>
<dbReference type="Pfam" id="PF14437">
    <property type="entry name" value="MafB19-deam"/>
    <property type="match status" value="1"/>
</dbReference>
<dbReference type="SUPFAM" id="SSF53927">
    <property type="entry name" value="Cytidine deaminase-like"/>
    <property type="match status" value="1"/>
</dbReference>
<dbReference type="PROSITE" id="PS00903">
    <property type="entry name" value="CYT_DCMP_DEAMINASES_1"/>
    <property type="match status" value="1"/>
</dbReference>
<dbReference type="PROSITE" id="PS51747">
    <property type="entry name" value="CYT_DCMP_DEAMINASES_2"/>
    <property type="match status" value="1"/>
</dbReference>
<reference key="1">
    <citation type="journal article" date="2002" name="Proc. Natl. Acad. Sci. U.S.A.">
        <title>Genome sequence and comparative microarray analysis of serotype M18 group A Streptococcus strains associated with acute rheumatic fever outbreaks.</title>
        <authorList>
            <person name="Smoot J.C."/>
            <person name="Barbian K.D."/>
            <person name="Van Gompel J.J."/>
            <person name="Smoot L.M."/>
            <person name="Chaussee M.S."/>
            <person name="Sylva G.L."/>
            <person name="Sturdevant D.E."/>
            <person name="Ricklefs S.M."/>
            <person name="Porcella S.F."/>
            <person name="Parkins L.D."/>
            <person name="Beres S.B."/>
            <person name="Campbell D.S."/>
            <person name="Smith T.M."/>
            <person name="Zhang Q."/>
            <person name="Kapur V."/>
            <person name="Daly J.A."/>
            <person name="Veasy L.G."/>
            <person name="Musser J.M."/>
        </authorList>
    </citation>
    <scope>NUCLEOTIDE SEQUENCE [LARGE SCALE GENOMIC DNA]</scope>
    <source>
        <strain>MGAS8232</strain>
    </source>
</reference>
<accession>Q8P2R7</accession>
<evidence type="ECO:0000255" key="1">
    <source>
        <dbReference type="HAMAP-Rule" id="MF_00972"/>
    </source>
</evidence>
<evidence type="ECO:0000255" key="2">
    <source>
        <dbReference type="PROSITE-ProRule" id="PRU01083"/>
    </source>
</evidence>